<feature type="chain" id="PRO_1000051435" description="Asparagine--tRNA ligase">
    <location>
        <begin position="1"/>
        <end position="461"/>
    </location>
</feature>
<protein>
    <recommendedName>
        <fullName evidence="1">Asparagine--tRNA ligase</fullName>
        <ecNumber evidence="1">6.1.1.22</ecNumber>
    </recommendedName>
    <alternativeName>
        <fullName evidence="1">Asparaginyl-tRNA synthetase</fullName>
        <shortName evidence="1">AsnRS</shortName>
    </alternativeName>
</protein>
<evidence type="ECO:0000255" key="1">
    <source>
        <dbReference type="HAMAP-Rule" id="MF_00534"/>
    </source>
</evidence>
<reference key="1">
    <citation type="journal article" date="2009" name="Appl. Environ. Microbiol.">
        <title>Three genomes from the phylum Acidobacteria provide insight into the lifestyles of these microorganisms in soils.</title>
        <authorList>
            <person name="Ward N.L."/>
            <person name="Challacombe J.F."/>
            <person name="Janssen P.H."/>
            <person name="Henrissat B."/>
            <person name="Coutinho P.M."/>
            <person name="Wu M."/>
            <person name="Xie G."/>
            <person name="Haft D.H."/>
            <person name="Sait M."/>
            <person name="Badger J."/>
            <person name="Barabote R.D."/>
            <person name="Bradley B."/>
            <person name="Brettin T.S."/>
            <person name="Brinkac L.M."/>
            <person name="Bruce D."/>
            <person name="Creasy T."/>
            <person name="Daugherty S.C."/>
            <person name="Davidsen T.M."/>
            <person name="DeBoy R.T."/>
            <person name="Detter J.C."/>
            <person name="Dodson R.J."/>
            <person name="Durkin A.S."/>
            <person name="Ganapathy A."/>
            <person name="Gwinn-Giglio M."/>
            <person name="Han C.S."/>
            <person name="Khouri H."/>
            <person name="Kiss H."/>
            <person name="Kothari S.P."/>
            <person name="Madupu R."/>
            <person name="Nelson K.E."/>
            <person name="Nelson W.C."/>
            <person name="Paulsen I."/>
            <person name="Penn K."/>
            <person name="Ren Q."/>
            <person name="Rosovitz M.J."/>
            <person name="Selengut J.D."/>
            <person name="Shrivastava S."/>
            <person name="Sullivan S.A."/>
            <person name="Tapia R."/>
            <person name="Thompson L.S."/>
            <person name="Watkins K.L."/>
            <person name="Yang Q."/>
            <person name="Yu C."/>
            <person name="Zafar N."/>
            <person name="Zhou L."/>
            <person name="Kuske C.R."/>
        </authorList>
    </citation>
    <scope>NUCLEOTIDE SEQUENCE [LARGE SCALE GENOMIC DNA]</scope>
    <source>
        <strain>Ellin6076</strain>
    </source>
</reference>
<comment type="catalytic activity">
    <reaction evidence="1">
        <text>tRNA(Asn) + L-asparagine + ATP = L-asparaginyl-tRNA(Asn) + AMP + diphosphate + H(+)</text>
        <dbReference type="Rhea" id="RHEA:11180"/>
        <dbReference type="Rhea" id="RHEA-COMP:9659"/>
        <dbReference type="Rhea" id="RHEA-COMP:9674"/>
        <dbReference type="ChEBI" id="CHEBI:15378"/>
        <dbReference type="ChEBI" id="CHEBI:30616"/>
        <dbReference type="ChEBI" id="CHEBI:33019"/>
        <dbReference type="ChEBI" id="CHEBI:58048"/>
        <dbReference type="ChEBI" id="CHEBI:78442"/>
        <dbReference type="ChEBI" id="CHEBI:78515"/>
        <dbReference type="ChEBI" id="CHEBI:456215"/>
        <dbReference type="EC" id="6.1.1.22"/>
    </reaction>
</comment>
<comment type="subunit">
    <text evidence="1">Homodimer.</text>
</comment>
<comment type="subcellular location">
    <subcellularLocation>
        <location evidence="1">Cytoplasm</location>
    </subcellularLocation>
</comment>
<comment type="similarity">
    <text evidence="1">Belongs to the class-II aminoacyl-tRNA synthetase family.</text>
</comment>
<name>SYN_SOLUE</name>
<keyword id="KW-0030">Aminoacyl-tRNA synthetase</keyword>
<keyword id="KW-0067">ATP-binding</keyword>
<keyword id="KW-0963">Cytoplasm</keyword>
<keyword id="KW-0436">Ligase</keyword>
<keyword id="KW-0547">Nucleotide-binding</keyword>
<keyword id="KW-0648">Protein biosynthesis</keyword>
<sequence>MIQPDSYVRSLLKRSPGESVTARGWVKTRRDSKNVHFIQLNDGSSPVDLQVVLDAGVVPEDVVAKITTGACISVEGDLVASMGKGQAVEIKARALTVHGTADPEHYPLQKKKHTLETLRELGHLRTRSNTFGAVFRVRNALACAIHKFFQDRGFMYVHTPVISASDAEGAGSMFQVTTLDLQSPKPADFTGDFFGKHTYLTVSGQLEAEIFAHAFANVYTFGPTFRAENSNTPRHLAEFYMIEPEMAFCDLKDNQDLAEAFLKSQVEYVVNACGPDLDFLAKWYDPELRKTLDGLMNASFERITYTEAIDLLQRSGRSFEFPTQWGSDMQSEHERYLTEEVFNKPVIVTDYPKDIKAFYMRGNDDGKTVAAMDVLAPRIGEIIGGSQREERHDVLLQRIREMAAHGLREEAYWWYLDLRRFGGVEHAGFGMGFERMLMYLTGMKNIRDVIPFPRTPGNAEF</sequence>
<proteinExistence type="inferred from homology"/>
<gene>
    <name evidence="1" type="primary">asnS</name>
    <name type="ordered locus">Acid_2805</name>
</gene>
<organism>
    <name type="scientific">Solibacter usitatus (strain Ellin6076)</name>
    <dbReference type="NCBI Taxonomy" id="234267"/>
    <lineage>
        <taxon>Bacteria</taxon>
        <taxon>Pseudomonadati</taxon>
        <taxon>Acidobacteriota</taxon>
        <taxon>Terriglobia</taxon>
        <taxon>Bryobacterales</taxon>
        <taxon>Solibacteraceae</taxon>
        <taxon>Candidatus Solibacter</taxon>
    </lineage>
</organism>
<dbReference type="EC" id="6.1.1.22" evidence="1"/>
<dbReference type="EMBL" id="CP000473">
    <property type="protein sequence ID" value="ABJ83791.1"/>
    <property type="molecule type" value="Genomic_DNA"/>
</dbReference>
<dbReference type="SMR" id="Q023P9"/>
<dbReference type="FunCoup" id="Q023P9">
    <property type="interactions" value="531"/>
</dbReference>
<dbReference type="STRING" id="234267.Acid_2805"/>
<dbReference type="KEGG" id="sus:Acid_2805"/>
<dbReference type="eggNOG" id="COG0017">
    <property type="taxonomic scope" value="Bacteria"/>
</dbReference>
<dbReference type="HOGENOM" id="CLU_004553_2_0_0"/>
<dbReference type="InParanoid" id="Q023P9"/>
<dbReference type="OrthoDB" id="9762036at2"/>
<dbReference type="GO" id="GO:0005737">
    <property type="term" value="C:cytoplasm"/>
    <property type="evidence" value="ECO:0007669"/>
    <property type="project" value="UniProtKB-SubCell"/>
</dbReference>
<dbReference type="GO" id="GO:0004816">
    <property type="term" value="F:asparagine-tRNA ligase activity"/>
    <property type="evidence" value="ECO:0007669"/>
    <property type="project" value="UniProtKB-UniRule"/>
</dbReference>
<dbReference type="GO" id="GO:0005524">
    <property type="term" value="F:ATP binding"/>
    <property type="evidence" value="ECO:0007669"/>
    <property type="project" value="UniProtKB-UniRule"/>
</dbReference>
<dbReference type="GO" id="GO:0003676">
    <property type="term" value="F:nucleic acid binding"/>
    <property type="evidence" value="ECO:0007669"/>
    <property type="project" value="InterPro"/>
</dbReference>
<dbReference type="GO" id="GO:0006421">
    <property type="term" value="P:asparaginyl-tRNA aminoacylation"/>
    <property type="evidence" value="ECO:0007669"/>
    <property type="project" value="UniProtKB-UniRule"/>
</dbReference>
<dbReference type="CDD" id="cd00776">
    <property type="entry name" value="AsxRS_core"/>
    <property type="match status" value="1"/>
</dbReference>
<dbReference type="CDD" id="cd04318">
    <property type="entry name" value="EcAsnRS_like_N"/>
    <property type="match status" value="1"/>
</dbReference>
<dbReference type="FunFam" id="3.30.930.10:FF:000016">
    <property type="entry name" value="Asparagine--tRNA ligase"/>
    <property type="match status" value="1"/>
</dbReference>
<dbReference type="Gene3D" id="3.30.930.10">
    <property type="entry name" value="Bira Bifunctional Protein, Domain 2"/>
    <property type="match status" value="1"/>
</dbReference>
<dbReference type="Gene3D" id="2.40.50.140">
    <property type="entry name" value="Nucleic acid-binding proteins"/>
    <property type="match status" value="1"/>
</dbReference>
<dbReference type="HAMAP" id="MF_00534">
    <property type="entry name" value="Asn_tRNA_synth"/>
    <property type="match status" value="1"/>
</dbReference>
<dbReference type="InterPro" id="IPR004364">
    <property type="entry name" value="Aa-tRNA-synt_II"/>
</dbReference>
<dbReference type="InterPro" id="IPR006195">
    <property type="entry name" value="aa-tRNA-synth_II"/>
</dbReference>
<dbReference type="InterPro" id="IPR045864">
    <property type="entry name" value="aa-tRNA-synth_II/BPL/LPL"/>
</dbReference>
<dbReference type="InterPro" id="IPR004522">
    <property type="entry name" value="Asn-tRNA-ligase"/>
</dbReference>
<dbReference type="InterPro" id="IPR002312">
    <property type="entry name" value="Asp/Asn-tRNA-synth_IIb"/>
</dbReference>
<dbReference type="InterPro" id="IPR012340">
    <property type="entry name" value="NA-bd_OB-fold"/>
</dbReference>
<dbReference type="InterPro" id="IPR004365">
    <property type="entry name" value="NA-bd_OB_tRNA"/>
</dbReference>
<dbReference type="NCBIfam" id="TIGR00457">
    <property type="entry name" value="asnS"/>
    <property type="match status" value="1"/>
</dbReference>
<dbReference type="NCBIfam" id="NF003037">
    <property type="entry name" value="PRK03932.1"/>
    <property type="match status" value="1"/>
</dbReference>
<dbReference type="PANTHER" id="PTHR22594:SF34">
    <property type="entry name" value="ASPARAGINE--TRNA LIGASE, MITOCHONDRIAL-RELATED"/>
    <property type="match status" value="1"/>
</dbReference>
<dbReference type="PANTHER" id="PTHR22594">
    <property type="entry name" value="ASPARTYL/LYSYL-TRNA SYNTHETASE"/>
    <property type="match status" value="1"/>
</dbReference>
<dbReference type="Pfam" id="PF00152">
    <property type="entry name" value="tRNA-synt_2"/>
    <property type="match status" value="1"/>
</dbReference>
<dbReference type="Pfam" id="PF01336">
    <property type="entry name" value="tRNA_anti-codon"/>
    <property type="match status" value="1"/>
</dbReference>
<dbReference type="PRINTS" id="PR01042">
    <property type="entry name" value="TRNASYNTHASP"/>
</dbReference>
<dbReference type="SUPFAM" id="SSF55681">
    <property type="entry name" value="Class II aaRS and biotin synthetases"/>
    <property type="match status" value="1"/>
</dbReference>
<dbReference type="SUPFAM" id="SSF50249">
    <property type="entry name" value="Nucleic acid-binding proteins"/>
    <property type="match status" value="1"/>
</dbReference>
<dbReference type="PROSITE" id="PS50862">
    <property type="entry name" value="AA_TRNA_LIGASE_II"/>
    <property type="match status" value="1"/>
</dbReference>
<accession>Q023P9</accession>